<proteinExistence type="inferred from homology"/>
<evidence type="ECO:0000255" key="1">
    <source>
        <dbReference type="HAMAP-Rule" id="MF_01310"/>
    </source>
</evidence>
<evidence type="ECO:0000305" key="2"/>
<comment type="function">
    <text evidence="1">Located on the platform of the 30S subunit, it bridges several disparate RNA helices of the 16S rRNA. Forms part of the Shine-Dalgarno cleft in the 70S ribosome.</text>
</comment>
<comment type="subunit">
    <text evidence="1">Part of the 30S ribosomal subunit. Interacts with proteins S7 and S18. Binds to IF-3.</text>
</comment>
<comment type="similarity">
    <text evidence="1">Belongs to the universal ribosomal protein uS11 family.</text>
</comment>
<feature type="chain" id="PRO_1000051835" description="Small ribosomal subunit protein uS11">
    <location>
        <begin position="1"/>
        <end position="129"/>
    </location>
</feature>
<keyword id="KW-0687">Ribonucleoprotein</keyword>
<keyword id="KW-0689">Ribosomal protein</keyword>
<keyword id="KW-0694">RNA-binding</keyword>
<keyword id="KW-0699">rRNA-binding</keyword>
<accession>A5UDS4</accession>
<gene>
    <name evidence="1" type="primary">rpsK</name>
    <name type="ordered locus">CGSHiEE_08060</name>
</gene>
<protein>
    <recommendedName>
        <fullName evidence="1">Small ribosomal subunit protein uS11</fullName>
    </recommendedName>
    <alternativeName>
        <fullName evidence="2">30S ribosomal protein S11</fullName>
    </alternativeName>
</protein>
<reference key="1">
    <citation type="journal article" date="2007" name="Genome Biol.">
        <title>Characterization and modeling of the Haemophilus influenzae core and supragenomes based on the complete genomic sequences of Rd and 12 clinical nontypeable strains.</title>
        <authorList>
            <person name="Hogg J.S."/>
            <person name="Hu F.Z."/>
            <person name="Janto B."/>
            <person name="Boissy R."/>
            <person name="Hayes J."/>
            <person name="Keefe R."/>
            <person name="Post J.C."/>
            <person name="Ehrlich G.D."/>
        </authorList>
    </citation>
    <scope>NUCLEOTIDE SEQUENCE [LARGE SCALE GENOMIC DNA]</scope>
    <source>
        <strain>PittEE</strain>
    </source>
</reference>
<name>RS11_HAEIE</name>
<sequence length="129" mass="13899">MAKTPVRARKRVKKQVVDGVAHIHASFNNTIVTITDRQGNALAWATAGGSGFRGSRKSTPFAAQVAAERCAEIVKEFGLKNLEVMVKGPGPGRESTIRALNAAGFRITNITDVTPIPHNGCRPPKKRRV</sequence>
<organism>
    <name type="scientific">Haemophilus influenzae (strain PittEE)</name>
    <dbReference type="NCBI Taxonomy" id="374930"/>
    <lineage>
        <taxon>Bacteria</taxon>
        <taxon>Pseudomonadati</taxon>
        <taxon>Pseudomonadota</taxon>
        <taxon>Gammaproteobacteria</taxon>
        <taxon>Pasteurellales</taxon>
        <taxon>Pasteurellaceae</taxon>
        <taxon>Haemophilus</taxon>
    </lineage>
</organism>
<dbReference type="EMBL" id="CP000671">
    <property type="protein sequence ID" value="ABQ98925.1"/>
    <property type="molecule type" value="Genomic_DNA"/>
</dbReference>
<dbReference type="SMR" id="A5UDS4"/>
<dbReference type="KEGG" id="hip:CGSHiEE_08060"/>
<dbReference type="HOGENOM" id="CLU_072439_5_0_6"/>
<dbReference type="GO" id="GO:1990904">
    <property type="term" value="C:ribonucleoprotein complex"/>
    <property type="evidence" value="ECO:0007669"/>
    <property type="project" value="UniProtKB-KW"/>
</dbReference>
<dbReference type="GO" id="GO:0005840">
    <property type="term" value="C:ribosome"/>
    <property type="evidence" value="ECO:0007669"/>
    <property type="project" value="UniProtKB-KW"/>
</dbReference>
<dbReference type="GO" id="GO:0019843">
    <property type="term" value="F:rRNA binding"/>
    <property type="evidence" value="ECO:0007669"/>
    <property type="project" value="UniProtKB-UniRule"/>
</dbReference>
<dbReference type="GO" id="GO:0003735">
    <property type="term" value="F:structural constituent of ribosome"/>
    <property type="evidence" value="ECO:0007669"/>
    <property type="project" value="InterPro"/>
</dbReference>
<dbReference type="GO" id="GO:0006412">
    <property type="term" value="P:translation"/>
    <property type="evidence" value="ECO:0007669"/>
    <property type="project" value="UniProtKB-UniRule"/>
</dbReference>
<dbReference type="FunFam" id="3.30.420.80:FF:000001">
    <property type="entry name" value="30S ribosomal protein S11"/>
    <property type="match status" value="1"/>
</dbReference>
<dbReference type="Gene3D" id="3.30.420.80">
    <property type="entry name" value="Ribosomal protein S11"/>
    <property type="match status" value="1"/>
</dbReference>
<dbReference type="HAMAP" id="MF_01310">
    <property type="entry name" value="Ribosomal_uS11"/>
    <property type="match status" value="1"/>
</dbReference>
<dbReference type="InterPro" id="IPR001971">
    <property type="entry name" value="Ribosomal_uS11"/>
</dbReference>
<dbReference type="InterPro" id="IPR019981">
    <property type="entry name" value="Ribosomal_uS11_bac-type"/>
</dbReference>
<dbReference type="InterPro" id="IPR018102">
    <property type="entry name" value="Ribosomal_uS11_CS"/>
</dbReference>
<dbReference type="InterPro" id="IPR036967">
    <property type="entry name" value="Ribosomal_uS11_sf"/>
</dbReference>
<dbReference type="NCBIfam" id="NF003698">
    <property type="entry name" value="PRK05309.1"/>
    <property type="match status" value="1"/>
</dbReference>
<dbReference type="NCBIfam" id="TIGR03632">
    <property type="entry name" value="uS11_bact"/>
    <property type="match status" value="1"/>
</dbReference>
<dbReference type="PANTHER" id="PTHR11759">
    <property type="entry name" value="40S RIBOSOMAL PROTEIN S14/30S RIBOSOMAL PROTEIN S11"/>
    <property type="match status" value="1"/>
</dbReference>
<dbReference type="Pfam" id="PF00411">
    <property type="entry name" value="Ribosomal_S11"/>
    <property type="match status" value="1"/>
</dbReference>
<dbReference type="PIRSF" id="PIRSF002131">
    <property type="entry name" value="Ribosomal_S11"/>
    <property type="match status" value="1"/>
</dbReference>
<dbReference type="SUPFAM" id="SSF53137">
    <property type="entry name" value="Translational machinery components"/>
    <property type="match status" value="1"/>
</dbReference>
<dbReference type="PROSITE" id="PS00054">
    <property type="entry name" value="RIBOSOMAL_S11"/>
    <property type="match status" value="1"/>
</dbReference>